<evidence type="ECO:0000255" key="1">
    <source>
        <dbReference type="HAMAP-Rule" id="MF_03101"/>
    </source>
</evidence>
<protein>
    <recommendedName>
        <fullName evidence="1">Deoxyhypusine hydroxylase</fullName>
        <shortName evidence="1">DOHH</shortName>
        <ecNumber evidence="1">1.14.99.29</ecNumber>
    </recommendedName>
    <alternativeName>
        <fullName evidence="1">Deoxyhypusine dioxygenase</fullName>
    </alternativeName>
    <alternativeName>
        <fullName evidence="1">Deoxyhypusine monooxygenase</fullName>
    </alternativeName>
</protein>
<name>DOHH_SCHPO</name>
<reference key="1">
    <citation type="journal article" date="2002" name="Nature">
        <title>The genome sequence of Schizosaccharomyces pombe.</title>
        <authorList>
            <person name="Wood V."/>
            <person name="Gwilliam R."/>
            <person name="Rajandream M.A."/>
            <person name="Lyne M.H."/>
            <person name="Lyne R."/>
            <person name="Stewart A."/>
            <person name="Sgouros J.G."/>
            <person name="Peat N."/>
            <person name="Hayles J."/>
            <person name="Baker S.G."/>
            <person name="Basham D."/>
            <person name="Bowman S."/>
            <person name="Brooks K."/>
            <person name="Brown D."/>
            <person name="Brown S."/>
            <person name="Chillingworth T."/>
            <person name="Churcher C.M."/>
            <person name="Collins M."/>
            <person name="Connor R."/>
            <person name="Cronin A."/>
            <person name="Davis P."/>
            <person name="Feltwell T."/>
            <person name="Fraser A."/>
            <person name="Gentles S."/>
            <person name="Goble A."/>
            <person name="Hamlin N."/>
            <person name="Harris D.E."/>
            <person name="Hidalgo J."/>
            <person name="Hodgson G."/>
            <person name="Holroyd S."/>
            <person name="Hornsby T."/>
            <person name="Howarth S."/>
            <person name="Huckle E.J."/>
            <person name="Hunt S."/>
            <person name="Jagels K."/>
            <person name="James K.D."/>
            <person name="Jones L."/>
            <person name="Jones M."/>
            <person name="Leather S."/>
            <person name="McDonald S."/>
            <person name="McLean J."/>
            <person name="Mooney P."/>
            <person name="Moule S."/>
            <person name="Mungall K.L."/>
            <person name="Murphy L.D."/>
            <person name="Niblett D."/>
            <person name="Odell C."/>
            <person name="Oliver K."/>
            <person name="O'Neil S."/>
            <person name="Pearson D."/>
            <person name="Quail M.A."/>
            <person name="Rabbinowitsch E."/>
            <person name="Rutherford K.M."/>
            <person name="Rutter S."/>
            <person name="Saunders D."/>
            <person name="Seeger K."/>
            <person name="Sharp S."/>
            <person name="Skelton J."/>
            <person name="Simmonds M.N."/>
            <person name="Squares R."/>
            <person name="Squares S."/>
            <person name="Stevens K."/>
            <person name="Taylor K."/>
            <person name="Taylor R.G."/>
            <person name="Tivey A."/>
            <person name="Walsh S.V."/>
            <person name="Warren T."/>
            <person name="Whitehead S."/>
            <person name="Woodward J.R."/>
            <person name="Volckaert G."/>
            <person name="Aert R."/>
            <person name="Robben J."/>
            <person name="Grymonprez B."/>
            <person name="Weltjens I."/>
            <person name="Vanstreels E."/>
            <person name="Rieger M."/>
            <person name="Schaefer M."/>
            <person name="Mueller-Auer S."/>
            <person name="Gabel C."/>
            <person name="Fuchs M."/>
            <person name="Duesterhoeft A."/>
            <person name="Fritzc C."/>
            <person name="Holzer E."/>
            <person name="Moestl D."/>
            <person name="Hilbert H."/>
            <person name="Borzym K."/>
            <person name="Langer I."/>
            <person name="Beck A."/>
            <person name="Lehrach H."/>
            <person name="Reinhardt R."/>
            <person name="Pohl T.M."/>
            <person name="Eger P."/>
            <person name="Zimmermann W."/>
            <person name="Wedler H."/>
            <person name="Wambutt R."/>
            <person name="Purnelle B."/>
            <person name="Goffeau A."/>
            <person name="Cadieu E."/>
            <person name="Dreano S."/>
            <person name="Gloux S."/>
            <person name="Lelaure V."/>
            <person name="Mottier S."/>
            <person name="Galibert F."/>
            <person name="Aves S.J."/>
            <person name="Xiang Z."/>
            <person name="Hunt C."/>
            <person name="Moore K."/>
            <person name="Hurst S.M."/>
            <person name="Lucas M."/>
            <person name="Rochet M."/>
            <person name="Gaillardin C."/>
            <person name="Tallada V.A."/>
            <person name="Garzon A."/>
            <person name="Thode G."/>
            <person name="Daga R.R."/>
            <person name="Cruzado L."/>
            <person name="Jimenez J."/>
            <person name="Sanchez M."/>
            <person name="del Rey F."/>
            <person name="Benito J."/>
            <person name="Dominguez A."/>
            <person name="Revuelta J.L."/>
            <person name="Moreno S."/>
            <person name="Armstrong J."/>
            <person name="Forsburg S.L."/>
            <person name="Cerutti L."/>
            <person name="Lowe T."/>
            <person name="McCombie W.R."/>
            <person name="Paulsen I."/>
            <person name="Potashkin J."/>
            <person name="Shpakovski G.V."/>
            <person name="Ussery D."/>
            <person name="Barrell B.G."/>
            <person name="Nurse P."/>
        </authorList>
    </citation>
    <scope>NUCLEOTIDE SEQUENCE [LARGE SCALE GENOMIC DNA]</scope>
    <source>
        <strain>972 / ATCC 24843</strain>
    </source>
</reference>
<reference key="2">
    <citation type="journal article" date="2004" name="Mol. Biol. Cell">
        <title>Mmd1p, a novel, conserved protein essential for normal mitochondrial morphology and distribution in the fission yeast Schizosaccharomyces pombe.</title>
        <authorList>
            <person name="Weir B.A."/>
            <person name="Yaffe M.P."/>
        </authorList>
    </citation>
    <scope>SUBCELLULAR LOCATION</scope>
</reference>
<accession>Q9P6K9</accession>
<organism>
    <name type="scientific">Schizosaccharomyces pombe (strain 972 / ATCC 24843)</name>
    <name type="common">Fission yeast</name>
    <dbReference type="NCBI Taxonomy" id="284812"/>
    <lineage>
        <taxon>Eukaryota</taxon>
        <taxon>Fungi</taxon>
        <taxon>Dikarya</taxon>
        <taxon>Ascomycota</taxon>
        <taxon>Taphrinomycotina</taxon>
        <taxon>Schizosaccharomycetes</taxon>
        <taxon>Schizosaccharomycetales</taxon>
        <taxon>Schizosaccharomycetaceae</taxon>
        <taxon>Schizosaccharomyces</taxon>
    </lineage>
</organism>
<gene>
    <name type="primary">lia1</name>
    <name type="synonym">mmd1</name>
    <name type="ORF">SPAC30C2.02</name>
</gene>
<proteinExistence type="inferred from homology"/>
<keyword id="KW-0963">Cytoplasm</keyword>
<keyword id="KW-0386">Hypusine biosynthesis</keyword>
<keyword id="KW-0408">Iron</keyword>
<keyword id="KW-0479">Metal-binding</keyword>
<keyword id="KW-0503">Monooxygenase</keyword>
<keyword id="KW-0539">Nucleus</keyword>
<keyword id="KW-0560">Oxidoreductase</keyword>
<keyword id="KW-1185">Reference proteome</keyword>
<keyword id="KW-0677">Repeat</keyword>
<feature type="chain" id="PRO_0000283672" description="Deoxyhypusine hydroxylase">
    <location>
        <begin position="1"/>
        <end position="318"/>
    </location>
</feature>
<feature type="repeat" description="HEAT-like PBS-type 1">
    <location>
        <begin position="96"/>
        <end position="122"/>
    </location>
</feature>
<feature type="repeat" description="HEAT-like PBS-type 2">
    <location>
        <begin position="194"/>
        <end position="220"/>
    </location>
</feature>
<feature type="repeat" description="HEAT-like PBS-type 3">
    <location>
        <begin position="225"/>
        <end position="251"/>
    </location>
</feature>
<feature type="repeat" description="HEAT-like PBS-type 4">
    <location>
        <begin position="258"/>
        <end position="284"/>
    </location>
</feature>
<feature type="binding site" evidence="1">
    <location>
        <position position="65"/>
    </location>
    <ligand>
        <name>Fe cation</name>
        <dbReference type="ChEBI" id="CHEBI:24875"/>
        <label>1</label>
    </ligand>
</feature>
<feature type="binding site" evidence="1">
    <location>
        <position position="66"/>
    </location>
    <ligand>
        <name>Fe cation</name>
        <dbReference type="ChEBI" id="CHEBI:24875"/>
        <label>1</label>
    </ligand>
</feature>
<feature type="binding site" evidence="1">
    <location>
        <position position="98"/>
    </location>
    <ligand>
        <name>Fe cation</name>
        <dbReference type="ChEBI" id="CHEBI:24875"/>
        <label>1</label>
    </ligand>
</feature>
<feature type="binding site" evidence="1">
    <location>
        <position position="99"/>
    </location>
    <ligand>
        <name>Fe cation</name>
        <dbReference type="ChEBI" id="CHEBI:24875"/>
        <label>1</label>
    </ligand>
</feature>
<feature type="binding site" evidence="1">
    <location>
        <position position="227"/>
    </location>
    <ligand>
        <name>Fe cation</name>
        <dbReference type="ChEBI" id="CHEBI:24875"/>
        <label>2</label>
    </ligand>
</feature>
<feature type="binding site" evidence="1">
    <location>
        <position position="228"/>
    </location>
    <ligand>
        <name>Fe cation</name>
        <dbReference type="ChEBI" id="CHEBI:24875"/>
        <label>2</label>
    </ligand>
</feature>
<feature type="binding site" evidence="1">
    <location>
        <position position="260"/>
    </location>
    <ligand>
        <name>Fe cation</name>
        <dbReference type="ChEBI" id="CHEBI:24875"/>
        <label>2</label>
    </ligand>
</feature>
<feature type="binding site" evidence="1">
    <location>
        <position position="261"/>
    </location>
    <ligand>
        <name>Fe cation</name>
        <dbReference type="ChEBI" id="CHEBI:24875"/>
        <label>2</label>
    </ligand>
</feature>
<dbReference type="EC" id="1.14.99.29" evidence="1"/>
<dbReference type="EMBL" id="CU329670">
    <property type="protein sequence ID" value="CAB90789.1"/>
    <property type="molecule type" value="Genomic_DNA"/>
</dbReference>
<dbReference type="RefSeq" id="NP_594654.1">
    <property type="nucleotide sequence ID" value="NM_001020083.2"/>
</dbReference>
<dbReference type="SMR" id="Q9P6K9"/>
<dbReference type="BioGRID" id="277967">
    <property type="interactions" value="10"/>
</dbReference>
<dbReference type="FunCoup" id="Q9P6K9">
    <property type="interactions" value="378"/>
</dbReference>
<dbReference type="STRING" id="284812.Q9P6K9"/>
<dbReference type="iPTMnet" id="Q9P6K9"/>
<dbReference type="PaxDb" id="4896-SPAC30C2.02.1"/>
<dbReference type="EnsemblFungi" id="SPAC30C2.02.1">
    <property type="protein sequence ID" value="SPAC30C2.02.1:pep"/>
    <property type="gene ID" value="SPAC30C2.02"/>
</dbReference>
<dbReference type="GeneID" id="2541465"/>
<dbReference type="KEGG" id="spo:2541465"/>
<dbReference type="PomBase" id="SPAC30C2.02"/>
<dbReference type="VEuPathDB" id="FungiDB:SPAC30C2.02"/>
<dbReference type="eggNOG" id="KOG0567">
    <property type="taxonomic scope" value="Eukaryota"/>
</dbReference>
<dbReference type="HOGENOM" id="CLU_053974_0_0_1"/>
<dbReference type="InParanoid" id="Q9P6K9"/>
<dbReference type="OMA" id="LQEPCSI"/>
<dbReference type="PhylomeDB" id="Q9P6K9"/>
<dbReference type="Reactome" id="R-SPO-204626">
    <property type="pathway name" value="Hypusine synthesis from eIF5A-lysine"/>
</dbReference>
<dbReference type="UniPathway" id="UPA00354"/>
<dbReference type="PRO" id="PR:Q9P6K9"/>
<dbReference type="Proteomes" id="UP000002485">
    <property type="component" value="Chromosome I"/>
</dbReference>
<dbReference type="GO" id="GO:0005737">
    <property type="term" value="C:cytoplasm"/>
    <property type="evidence" value="ECO:0000314"/>
    <property type="project" value="PomBase"/>
</dbReference>
<dbReference type="GO" id="GO:0005829">
    <property type="term" value="C:cytosol"/>
    <property type="evidence" value="ECO:0007005"/>
    <property type="project" value="PomBase"/>
</dbReference>
<dbReference type="GO" id="GO:0005634">
    <property type="term" value="C:nucleus"/>
    <property type="evidence" value="ECO:0007005"/>
    <property type="project" value="PomBase"/>
</dbReference>
<dbReference type="GO" id="GO:0019135">
    <property type="term" value="F:deoxyhypusine monooxygenase activity"/>
    <property type="evidence" value="ECO:0000318"/>
    <property type="project" value="GO_Central"/>
</dbReference>
<dbReference type="GO" id="GO:0046872">
    <property type="term" value="F:metal ion binding"/>
    <property type="evidence" value="ECO:0007669"/>
    <property type="project" value="UniProtKB-KW"/>
</dbReference>
<dbReference type="GO" id="GO:2000765">
    <property type="term" value="P:regulation of cytoplasmic translation"/>
    <property type="evidence" value="ECO:0000305"/>
    <property type="project" value="PomBase"/>
</dbReference>
<dbReference type="FunFam" id="1.25.10.10:FF:000099">
    <property type="entry name" value="Deoxyhypusine hydroxylase"/>
    <property type="match status" value="1"/>
</dbReference>
<dbReference type="Gene3D" id="1.25.10.10">
    <property type="entry name" value="Leucine-rich Repeat Variant"/>
    <property type="match status" value="2"/>
</dbReference>
<dbReference type="HAMAP" id="MF_03101">
    <property type="entry name" value="Deoxyhypusine_hydroxylase"/>
    <property type="match status" value="1"/>
</dbReference>
<dbReference type="InterPro" id="IPR011989">
    <property type="entry name" value="ARM-like"/>
</dbReference>
<dbReference type="InterPro" id="IPR016024">
    <property type="entry name" value="ARM-type_fold"/>
</dbReference>
<dbReference type="InterPro" id="IPR000225">
    <property type="entry name" value="Armadillo"/>
</dbReference>
<dbReference type="InterPro" id="IPR027517">
    <property type="entry name" value="Deoxyhypusine_hydroxylase"/>
</dbReference>
<dbReference type="InterPro" id="IPR004155">
    <property type="entry name" value="PBS_lyase_HEAT"/>
</dbReference>
<dbReference type="PANTHER" id="PTHR12697:SF5">
    <property type="entry name" value="DEOXYHYPUSINE HYDROXYLASE"/>
    <property type="match status" value="1"/>
</dbReference>
<dbReference type="PANTHER" id="PTHR12697">
    <property type="entry name" value="PBS LYASE HEAT-LIKE PROTEIN"/>
    <property type="match status" value="1"/>
</dbReference>
<dbReference type="Pfam" id="PF13646">
    <property type="entry name" value="HEAT_2"/>
    <property type="match status" value="2"/>
</dbReference>
<dbReference type="SMART" id="SM00567">
    <property type="entry name" value="EZ_HEAT"/>
    <property type="match status" value="6"/>
</dbReference>
<dbReference type="SUPFAM" id="SSF48371">
    <property type="entry name" value="ARM repeat"/>
    <property type="match status" value="1"/>
</dbReference>
<comment type="function">
    <text evidence="1">Catalyzes the hydroxylation of the N(6)-(4-aminobutyl)-L-lysine intermediate to form hypusine, an essential post-translational modification only found in mature eIF-5A factor.</text>
</comment>
<comment type="catalytic activity">
    <reaction evidence="1">
        <text>[eIF5A protein]-deoxyhypusine + AH2 + O2 = [eIF5A protein]-hypusine + A + H2O</text>
        <dbReference type="Rhea" id="RHEA:14101"/>
        <dbReference type="Rhea" id="RHEA-COMP:10144"/>
        <dbReference type="Rhea" id="RHEA-COMP:12592"/>
        <dbReference type="ChEBI" id="CHEBI:13193"/>
        <dbReference type="ChEBI" id="CHEBI:15377"/>
        <dbReference type="ChEBI" id="CHEBI:15379"/>
        <dbReference type="ChEBI" id="CHEBI:17499"/>
        <dbReference type="ChEBI" id="CHEBI:82657"/>
        <dbReference type="ChEBI" id="CHEBI:91175"/>
        <dbReference type="EC" id="1.14.99.29"/>
    </reaction>
</comment>
<comment type="cofactor">
    <cofactor evidence="1">
        <name>Fe(2+)</name>
        <dbReference type="ChEBI" id="CHEBI:29033"/>
    </cofactor>
    <text evidence="1">Binds 2 Fe(2+) ions per subunit.</text>
</comment>
<comment type="pathway">
    <text evidence="1">Protein modification; eIF5A hypusination.</text>
</comment>
<comment type="subcellular location">
    <subcellularLocation>
        <location evidence="1">Cytoplasm</location>
    </subcellularLocation>
    <subcellularLocation>
        <location evidence="1">Nucleus</location>
    </subcellularLocation>
</comment>
<comment type="similarity">
    <text evidence="1">Belongs to the deoxyhypusine hydroxylase family.</text>
</comment>
<sequence>MSSEPVPQAVIDELERVLVNLDKSNPLSFRYRALFSLNALAKKGDKRAVDAIYKAFIDDSELLKHEMAYVMGQSGQQYAVQPLINIVNDLDQQVMVRHEAAEALGALGFTESLPVLEKYYKEDPLAPIRETCELAIARIQWKNGLDKNNEKITPSMYDSVVDPAPPMPDHEQDVKSEVAKLRSEIVDQNLPLFYRYRVMFRLRNIGNEEAVLALTDGFKDPSPLFRHEIAFVFGQMIAPASVPALIKVLENTEEVPMVRHEAAEALGGIANDECLPVLKKFSKDDVRVVAESCIVALDMIEYEKSGDMEYAYIPKVSA</sequence>